<comment type="function">
    <text evidence="4">Probable transporter of a GTP-driven Fe(2+) uptake system. Seems to be required for optimal intracellular infection of macrophages, to be important for growth and/or survival in iron-restricted amoebae. It also plays a key role in extracellular growth under iron-limited conditions.</text>
</comment>
<comment type="subcellular location">
    <subcellularLocation>
        <location evidence="1">Cell inner membrane</location>
        <topology evidence="1">Multi-pass membrane protein</topology>
    </subcellularLocation>
</comment>
<comment type="similarity">
    <text evidence="3">Belongs to the TRAFAC class TrmE-Era-EngA-EngB-Septin-like GTPase superfamily. FeoB GTPase (TC 9.A.8) family.</text>
</comment>
<reference key="1">
    <citation type="journal article" date="2002" name="Infect. Immun.">
        <title>Legionella pneumophila feoAB promotes ferrous iron uptake and intracellular infection.</title>
        <authorList>
            <person name="Robey M."/>
            <person name="Cianciotto N.P."/>
        </authorList>
    </citation>
    <scope>NUCLEOTIDE SEQUENCE [GENOMIC DNA]</scope>
    <scope>FUNCTION</scope>
    <source>
        <strain>130b / Wadsworth / Serogroup 1</strain>
    </source>
</reference>
<sequence length="751" mass="82514">MTHALLIGNPNCGKTTLFNALTNANQRVGNWPGVTVEKKTGEFLLGEHLIEITDLPGVYSLVANAEGISQDEQIAAQSVIDLEYDCIINVIDACHLERHLYLTSQLFELGKPVVVALNMMDIAEHRGISIDTEKLESLLGCSVIPIQAHKNIGIPALQQSLLHCSQKIKPLKLSLSVAAQQILNDLENQLISKGYKNSFAYYFSRRLAEGDTLIGEKAFTESLLIKLQETEQNLDVLLADARYQKIHEIVTLVQKKHSDASEHFTAKLDKLVLHRFLALPIFFAMMYLMFLFAINIGGAFQDFFDISTETIFVQGSGWLLQQLHAPNWVIALVANGVGKGINTTITFIPVIAAMFFFLSLLETSGYMARAAFVVDKAMRAMGLPGKSFVPMIVGFGCNVPAIMAARTLDSERDRLLTVMMSPFMSCSARLAIYAVFVAAFFPSGGHNVVFSLYLIGILMAVFTGYILRKTTLKGHASPLILELPAYHRPSLRRLLRETSLRLRFFVYRAGKLIIPICVILGGLNAITWGGGISSGEANTDSLLSIIGQWITPLFAPMGIHQDNWPATVGLLTGMLAKEVVVGTLNSLYAQVGHVGEITAAHFDFWGGIKAAFGSIPANLSELGSALWNPVSASAADSELSQSVYGIMSRRFDGAVGAYAYLLFVLLYIPCVSTMAVIRQEANKRFMWTSIVWSFVVAYATSVVFYQGAKFLDHPQQSMVWILAMSLSLLFVLAVFRYSQYGMGRQNAAANT</sequence>
<keyword id="KW-0002">3D-structure</keyword>
<keyword id="KW-0997">Cell inner membrane</keyword>
<keyword id="KW-1003">Cell membrane</keyword>
<keyword id="KW-0342">GTP-binding</keyword>
<keyword id="KW-0406">Ion transport</keyword>
<keyword id="KW-0408">Iron</keyword>
<keyword id="KW-0410">Iron transport</keyword>
<keyword id="KW-0472">Membrane</keyword>
<keyword id="KW-0547">Nucleotide-binding</keyword>
<keyword id="KW-0812">Transmembrane</keyword>
<keyword id="KW-1133">Transmembrane helix</keyword>
<keyword id="KW-0813">Transport</keyword>
<accession>Q8GNS3</accession>
<evidence type="ECO:0000250" key="1">
    <source>
        <dbReference type="UniProtKB" id="P33650"/>
    </source>
</evidence>
<evidence type="ECO:0000255" key="2"/>
<evidence type="ECO:0000255" key="3">
    <source>
        <dbReference type="PROSITE-ProRule" id="PRU01048"/>
    </source>
</evidence>
<evidence type="ECO:0000269" key="4">
    <source>
    </source>
</evidence>
<evidence type="ECO:0000305" key="5"/>
<evidence type="ECO:0007829" key="6">
    <source>
        <dbReference type="PDB" id="3IBY"/>
    </source>
</evidence>
<feature type="chain" id="PRO_0000210832" description="Fe(2+) transporter FeoB">
    <location>
        <begin position="1"/>
        <end position="751"/>
    </location>
</feature>
<feature type="transmembrane region" description="Helical" evidence="2">
    <location>
        <begin position="276"/>
        <end position="296"/>
    </location>
</feature>
<feature type="transmembrane region" description="Helical" evidence="2">
    <location>
        <begin position="341"/>
        <end position="361"/>
    </location>
</feature>
<feature type="transmembrane region" description="Helical" evidence="2">
    <location>
        <begin position="385"/>
        <end position="405"/>
    </location>
</feature>
<feature type="transmembrane region" description="Helical" evidence="2">
    <location>
        <begin position="422"/>
        <end position="442"/>
    </location>
</feature>
<feature type="transmembrane region" description="Helical" evidence="2">
    <location>
        <begin position="447"/>
        <end position="467"/>
    </location>
</feature>
<feature type="transmembrane region" description="Helical" evidence="2">
    <location>
        <begin position="512"/>
        <end position="532"/>
    </location>
</feature>
<feature type="transmembrane region" description="Helical" evidence="2">
    <location>
        <begin position="539"/>
        <end position="559"/>
    </location>
</feature>
<feature type="transmembrane region" description="Helical" evidence="2">
    <location>
        <begin position="657"/>
        <end position="677"/>
    </location>
</feature>
<feature type="transmembrane region" description="Helical" evidence="2">
    <location>
        <begin position="685"/>
        <end position="705"/>
    </location>
</feature>
<feature type="transmembrane region" description="Helical" evidence="2">
    <location>
        <begin position="715"/>
        <end position="735"/>
    </location>
</feature>
<feature type="domain" description="FeoB-type G" evidence="3">
    <location>
        <begin position="1"/>
        <end position="167"/>
    </location>
</feature>
<feature type="binding site" evidence="3">
    <location>
        <begin position="8"/>
        <end position="15"/>
    </location>
    <ligand>
        <name>GTP</name>
        <dbReference type="ChEBI" id="CHEBI:37565"/>
        <label>1</label>
    </ligand>
</feature>
<feature type="binding site" evidence="3">
    <location>
        <begin position="33"/>
        <end position="37"/>
    </location>
    <ligand>
        <name>GTP</name>
        <dbReference type="ChEBI" id="CHEBI:37565"/>
        <label>2</label>
    </ligand>
</feature>
<feature type="binding site" evidence="3">
    <location>
        <begin position="54"/>
        <end position="57"/>
    </location>
    <ligand>
        <name>GTP</name>
        <dbReference type="ChEBI" id="CHEBI:37565"/>
        <label>3</label>
    </ligand>
</feature>
<feature type="binding site" evidence="3">
    <location>
        <begin position="118"/>
        <end position="121"/>
    </location>
    <ligand>
        <name>GTP</name>
        <dbReference type="ChEBI" id="CHEBI:37565"/>
    </ligand>
</feature>
<feature type="binding site" evidence="3">
    <location>
        <begin position="147"/>
        <end position="149"/>
    </location>
    <ligand>
        <name>GTP</name>
        <dbReference type="ChEBI" id="CHEBI:37565"/>
    </ligand>
</feature>
<feature type="strand" evidence="6">
    <location>
        <begin position="3"/>
        <end position="9"/>
    </location>
</feature>
<feature type="helix" evidence="6">
    <location>
        <begin position="14"/>
        <end position="22"/>
    </location>
</feature>
<feature type="strand" evidence="6">
    <location>
        <begin position="25"/>
        <end position="30"/>
    </location>
</feature>
<feature type="strand" evidence="6">
    <location>
        <begin position="34"/>
        <end position="45"/>
    </location>
</feature>
<feature type="strand" evidence="6">
    <location>
        <begin position="48"/>
        <end position="54"/>
    </location>
</feature>
<feature type="strand" evidence="6">
    <location>
        <begin position="65"/>
        <end position="67"/>
    </location>
</feature>
<feature type="helix" evidence="6">
    <location>
        <begin position="70"/>
        <end position="81"/>
    </location>
</feature>
<feature type="strand" evidence="6">
    <location>
        <begin position="85"/>
        <end position="92"/>
    </location>
</feature>
<feature type="helix" evidence="6">
    <location>
        <begin position="93"/>
        <end position="95"/>
    </location>
</feature>
<feature type="helix" evidence="6">
    <location>
        <begin position="96"/>
        <end position="106"/>
    </location>
</feature>
<feature type="strand" evidence="6">
    <location>
        <begin position="113"/>
        <end position="118"/>
    </location>
</feature>
<feature type="helix" evidence="6">
    <location>
        <begin position="120"/>
        <end position="125"/>
    </location>
</feature>
<feature type="helix" evidence="6">
    <location>
        <begin position="132"/>
        <end position="139"/>
    </location>
</feature>
<feature type="strand" evidence="6">
    <location>
        <begin position="143"/>
        <end position="145"/>
    </location>
</feature>
<feature type="helix" evidence="6">
    <location>
        <begin position="148"/>
        <end position="150"/>
    </location>
</feature>
<feature type="helix" evidence="6">
    <location>
        <begin position="154"/>
        <end position="162"/>
    </location>
</feature>
<feature type="helix" evidence="6">
    <location>
        <begin position="177"/>
        <end position="193"/>
    </location>
</feature>
<feature type="helix" evidence="6">
    <location>
        <begin position="197"/>
        <end position="209"/>
    </location>
</feature>
<feature type="helix" evidence="6">
    <location>
        <begin position="214"/>
        <end position="217"/>
    </location>
</feature>
<feature type="helix" evidence="6">
    <location>
        <begin position="219"/>
        <end position="229"/>
    </location>
</feature>
<feature type="helix" evidence="6">
    <location>
        <begin position="234"/>
        <end position="253"/>
    </location>
</feature>
<organism>
    <name type="scientific">Legionella pneumophila</name>
    <dbReference type="NCBI Taxonomy" id="446"/>
    <lineage>
        <taxon>Bacteria</taxon>
        <taxon>Pseudomonadati</taxon>
        <taxon>Pseudomonadota</taxon>
        <taxon>Gammaproteobacteria</taxon>
        <taxon>Legionellales</taxon>
        <taxon>Legionellaceae</taxon>
        <taxon>Legionella</taxon>
    </lineage>
</organism>
<name>FEOB_LEGPN</name>
<dbReference type="EMBL" id="AF492466">
    <property type="protein sequence ID" value="AAN17185.1"/>
    <property type="molecule type" value="Genomic_DNA"/>
</dbReference>
<dbReference type="RefSeq" id="WP_038839664.1">
    <property type="nucleotide sequence ID" value="NZ_UGOS01000001.1"/>
</dbReference>
<dbReference type="PDB" id="3IBY">
    <property type="method" value="X-ray"/>
    <property type="resolution" value="2.50 A"/>
    <property type="chains" value="A/B/C/D=1-256"/>
</dbReference>
<dbReference type="PDBsum" id="3IBY"/>
<dbReference type="SMR" id="Q8GNS3"/>
<dbReference type="STRING" id="91892.BIZ52_13845"/>
<dbReference type="eggNOG" id="COG0370">
    <property type="taxonomic scope" value="Bacteria"/>
</dbReference>
<dbReference type="EvolutionaryTrace" id="Q8GNS3"/>
<dbReference type="GO" id="GO:0005886">
    <property type="term" value="C:plasma membrane"/>
    <property type="evidence" value="ECO:0007669"/>
    <property type="project" value="UniProtKB-SubCell"/>
</dbReference>
<dbReference type="GO" id="GO:0015093">
    <property type="term" value="F:ferrous iron transmembrane transporter activity"/>
    <property type="evidence" value="ECO:0007669"/>
    <property type="project" value="InterPro"/>
</dbReference>
<dbReference type="GO" id="GO:0005525">
    <property type="term" value="F:GTP binding"/>
    <property type="evidence" value="ECO:0007669"/>
    <property type="project" value="UniProtKB-KW"/>
</dbReference>
<dbReference type="CDD" id="cd01879">
    <property type="entry name" value="FeoB"/>
    <property type="match status" value="1"/>
</dbReference>
<dbReference type="FunFam" id="3.40.50.300:FF:000426">
    <property type="entry name" value="Ferrous iron transport protein B"/>
    <property type="match status" value="1"/>
</dbReference>
<dbReference type="Gene3D" id="1.10.287.1770">
    <property type="match status" value="1"/>
</dbReference>
<dbReference type="Gene3D" id="3.40.50.300">
    <property type="entry name" value="P-loop containing nucleotide triphosphate hydrolases"/>
    <property type="match status" value="1"/>
</dbReference>
<dbReference type="InterPro" id="IPR003373">
    <property type="entry name" value="Fe2_transport_prot-B"/>
</dbReference>
<dbReference type="InterPro" id="IPR011640">
    <property type="entry name" value="Fe2_transport_prot_B_C"/>
</dbReference>
<dbReference type="InterPro" id="IPR050860">
    <property type="entry name" value="FeoB_GTPase"/>
</dbReference>
<dbReference type="InterPro" id="IPR030389">
    <property type="entry name" value="G_FEOB_dom"/>
</dbReference>
<dbReference type="InterPro" id="IPR011642">
    <property type="entry name" value="Gate_dom"/>
</dbReference>
<dbReference type="InterPro" id="IPR006073">
    <property type="entry name" value="GTP-bd"/>
</dbReference>
<dbReference type="InterPro" id="IPR027417">
    <property type="entry name" value="P-loop_NTPase"/>
</dbReference>
<dbReference type="NCBIfam" id="TIGR00437">
    <property type="entry name" value="feoB"/>
    <property type="match status" value="1"/>
</dbReference>
<dbReference type="NCBIfam" id="NF007105">
    <property type="entry name" value="PRK09554.1"/>
    <property type="match status" value="1"/>
</dbReference>
<dbReference type="PANTHER" id="PTHR43185:SF1">
    <property type="entry name" value="FE(2+) TRANSPORTER FEOB"/>
    <property type="match status" value="1"/>
</dbReference>
<dbReference type="PANTHER" id="PTHR43185">
    <property type="entry name" value="FERROUS IRON TRANSPORT PROTEIN B"/>
    <property type="match status" value="1"/>
</dbReference>
<dbReference type="Pfam" id="PF07664">
    <property type="entry name" value="FeoB_C"/>
    <property type="match status" value="1"/>
</dbReference>
<dbReference type="Pfam" id="PF02421">
    <property type="entry name" value="FeoB_N"/>
    <property type="match status" value="1"/>
</dbReference>
<dbReference type="Pfam" id="PF07670">
    <property type="entry name" value="Gate"/>
    <property type="match status" value="2"/>
</dbReference>
<dbReference type="PRINTS" id="PR00326">
    <property type="entry name" value="GTP1OBG"/>
</dbReference>
<dbReference type="SUPFAM" id="SSF52540">
    <property type="entry name" value="P-loop containing nucleoside triphosphate hydrolases"/>
    <property type="match status" value="1"/>
</dbReference>
<dbReference type="PROSITE" id="PS51711">
    <property type="entry name" value="G_FEOB"/>
    <property type="match status" value="1"/>
</dbReference>
<protein>
    <recommendedName>
        <fullName evidence="5">Fe(2+) transporter FeoB</fullName>
    </recommendedName>
    <alternativeName>
        <fullName>Ferrous iron transport protein B</fullName>
    </alternativeName>
</protein>
<gene>
    <name type="primary">feoB</name>
</gene>
<proteinExistence type="evidence at protein level"/>